<name>O52E2_HUMAN</name>
<accession>Q8NGJ4</accession>
<comment type="function">
    <text evidence="4">Odorant receptor.</text>
</comment>
<comment type="subcellular location">
    <subcellularLocation>
        <location>Cell membrane</location>
        <topology>Multi-pass membrane protein</topology>
    </subcellularLocation>
</comment>
<comment type="similarity">
    <text evidence="2">Belongs to the G-protein coupled receptor 1 family.</text>
</comment>
<comment type="online information" name="Human Olfactory Receptor Data Exploratorium (HORDE)">
    <link uri="http://genome.weizmann.ac.il/horde/card/index/symbol:OR52E2"/>
</comment>
<evidence type="ECO:0000255" key="1"/>
<evidence type="ECO:0000255" key="2">
    <source>
        <dbReference type="PROSITE-ProRule" id="PRU00521"/>
    </source>
</evidence>
<evidence type="ECO:0000269" key="3">
    <source ref="1"/>
</evidence>
<evidence type="ECO:0000305" key="4"/>
<keyword id="KW-1003">Cell membrane</keyword>
<keyword id="KW-1015">Disulfide bond</keyword>
<keyword id="KW-0297">G-protein coupled receptor</keyword>
<keyword id="KW-0325">Glycoprotein</keyword>
<keyword id="KW-0472">Membrane</keyword>
<keyword id="KW-0552">Olfaction</keyword>
<keyword id="KW-0675">Receptor</keyword>
<keyword id="KW-1185">Reference proteome</keyword>
<keyword id="KW-0716">Sensory transduction</keyword>
<keyword id="KW-0807">Transducer</keyword>
<keyword id="KW-0812">Transmembrane</keyword>
<keyword id="KW-1133">Transmembrane helix</keyword>
<proteinExistence type="inferred from homology"/>
<reference key="1">
    <citation type="submission" date="2001-07" db="EMBL/GenBank/DDBJ databases">
        <title>Genome-wide discovery and analysis of human seven transmembrane helix receptor genes.</title>
        <authorList>
            <person name="Suwa M."/>
            <person name="Sato T."/>
            <person name="Okouchi I."/>
            <person name="Arita M."/>
            <person name="Futami K."/>
            <person name="Matsumoto S."/>
            <person name="Tsutsumi S."/>
            <person name="Aburatani H."/>
            <person name="Asai K."/>
            <person name="Akiyama Y."/>
        </authorList>
    </citation>
    <scope>NUCLEOTIDE SEQUENCE [GENOMIC DNA]</scope>
    <scope>VARIANT CYS-264</scope>
</reference>
<reference key="2">
    <citation type="journal article" date="2006" name="Nature">
        <title>Human chromosome 11 DNA sequence and analysis including novel gene identification.</title>
        <authorList>
            <person name="Taylor T.D."/>
            <person name="Noguchi H."/>
            <person name="Totoki Y."/>
            <person name="Toyoda A."/>
            <person name="Kuroki Y."/>
            <person name="Dewar K."/>
            <person name="Lloyd C."/>
            <person name="Itoh T."/>
            <person name="Takeda T."/>
            <person name="Kim D.-W."/>
            <person name="She X."/>
            <person name="Barlow K.F."/>
            <person name="Bloom T."/>
            <person name="Bruford E."/>
            <person name="Chang J.L."/>
            <person name="Cuomo C.A."/>
            <person name="Eichler E."/>
            <person name="FitzGerald M.G."/>
            <person name="Jaffe D.B."/>
            <person name="LaButti K."/>
            <person name="Nicol R."/>
            <person name="Park H.-S."/>
            <person name="Seaman C."/>
            <person name="Sougnez C."/>
            <person name="Yang X."/>
            <person name="Zimmer A.R."/>
            <person name="Zody M.C."/>
            <person name="Birren B.W."/>
            <person name="Nusbaum C."/>
            <person name="Fujiyama A."/>
            <person name="Hattori M."/>
            <person name="Rogers J."/>
            <person name="Lander E.S."/>
            <person name="Sakaki Y."/>
        </authorList>
    </citation>
    <scope>NUCLEOTIDE SEQUENCE [LARGE SCALE GENOMIC DNA]</scope>
</reference>
<gene>
    <name type="primary">OR52E2</name>
</gene>
<protein>
    <recommendedName>
        <fullName>Olfactory receptor 52E2</fullName>
    </recommendedName>
</protein>
<sequence length="325" mass="36630">MFLPNDTQFHPSSFLLLGIPGLETLHIWIGFPFCAVYMIALIGNFTILLVIKTDSSLHQPMFYFLAMLATTDVGLSTATIPKMLGIFWINLRGIIFEACLTQMFFIHNFTLMESAVLVAMAYDSYVAICNPLQYSAILTNKVVSVIGLGVFVRALIFVIPSILLILRLPFCGNHVIPHTYCEHMGLAHLSCASIKINIIYGLCAICNLVFDITVIALSYVHILCAVFRLPTHEARLKSLSTCGSHVCVILAFYTPALFSFMTHRFGRNVPRYIHILLANLYVVVPPMLNPVIYGVRTKQIYKCVKKILLQEQGMEKEEYLIHTRF</sequence>
<dbReference type="EMBL" id="AB065800">
    <property type="protein sequence ID" value="BAC06019.1"/>
    <property type="molecule type" value="Genomic_DNA"/>
</dbReference>
<dbReference type="EMBL" id="AC113331">
    <property type="status" value="NOT_ANNOTATED_CDS"/>
    <property type="molecule type" value="Genomic_DNA"/>
</dbReference>
<dbReference type="CCDS" id="CCDS31371.1"/>
<dbReference type="RefSeq" id="NP_001005164.2">
    <property type="nucleotide sequence ID" value="NM_001005164.2"/>
</dbReference>
<dbReference type="EMDB" id="EMD-35010"/>
<dbReference type="SMR" id="Q8NGJ4"/>
<dbReference type="BioGRID" id="125647">
    <property type="interactions" value="1"/>
</dbReference>
<dbReference type="FunCoup" id="Q8NGJ4">
    <property type="interactions" value="467"/>
</dbReference>
<dbReference type="STRING" id="9606.ENSP00000322088"/>
<dbReference type="GlyCosmos" id="Q8NGJ4">
    <property type="glycosylation" value="1 site, No reported glycans"/>
</dbReference>
<dbReference type="GlyGen" id="Q8NGJ4">
    <property type="glycosylation" value="1 site"/>
</dbReference>
<dbReference type="PhosphoSitePlus" id="Q8NGJ4"/>
<dbReference type="BioMuta" id="OR52E2"/>
<dbReference type="DMDM" id="296439248"/>
<dbReference type="jPOST" id="Q8NGJ4"/>
<dbReference type="PaxDb" id="9606-ENSP00000322088"/>
<dbReference type="PeptideAtlas" id="Q8NGJ4"/>
<dbReference type="ProteomicsDB" id="73530"/>
<dbReference type="Antibodypedia" id="49353">
    <property type="antibodies" value="119 antibodies from 25 providers"/>
</dbReference>
<dbReference type="DNASU" id="119678"/>
<dbReference type="Ensembl" id="ENST00000321522.2">
    <property type="protein sequence ID" value="ENSP00000322088.2"/>
    <property type="gene ID" value="ENSG00000176787.2"/>
</dbReference>
<dbReference type="Ensembl" id="ENST00000709177.1">
    <property type="protein sequence ID" value="ENSP00000517538.1"/>
    <property type="gene ID" value="ENSG00000291909.1"/>
</dbReference>
<dbReference type="GeneID" id="119678"/>
<dbReference type="KEGG" id="hsa:119678"/>
<dbReference type="MANE-Select" id="ENST00000321522.2">
    <property type="protein sequence ID" value="ENSP00000322088.2"/>
    <property type="RefSeq nucleotide sequence ID" value="NM_001005164.2"/>
    <property type="RefSeq protein sequence ID" value="NP_001005164.2"/>
</dbReference>
<dbReference type="UCSC" id="uc010qyw.2">
    <property type="organism name" value="human"/>
</dbReference>
<dbReference type="AGR" id="HGNC:14769"/>
<dbReference type="CTD" id="119678"/>
<dbReference type="GeneCards" id="OR52E2"/>
<dbReference type="HGNC" id="HGNC:14769">
    <property type="gene designation" value="OR52E2"/>
</dbReference>
<dbReference type="HPA" id="ENSG00000176787">
    <property type="expression patterns" value="Not detected"/>
</dbReference>
<dbReference type="neXtProt" id="NX_Q8NGJ4"/>
<dbReference type="PharmGKB" id="PA32403"/>
<dbReference type="VEuPathDB" id="HostDB:ENSG00000176787"/>
<dbReference type="eggNOG" id="ENOG502RNPB">
    <property type="taxonomic scope" value="Eukaryota"/>
</dbReference>
<dbReference type="GeneTree" id="ENSGT01090000260056"/>
<dbReference type="HOGENOM" id="CLU_012526_0_0_1"/>
<dbReference type="InParanoid" id="Q8NGJ4"/>
<dbReference type="OMA" id="EYLIHTR"/>
<dbReference type="OrthoDB" id="9444602at2759"/>
<dbReference type="PAN-GO" id="Q8NGJ4">
    <property type="GO annotations" value="0 GO annotations based on evolutionary models"/>
</dbReference>
<dbReference type="PhylomeDB" id="Q8NGJ4"/>
<dbReference type="TreeFam" id="TF343679"/>
<dbReference type="PathwayCommons" id="Q8NGJ4"/>
<dbReference type="Reactome" id="R-HSA-9752946">
    <property type="pathway name" value="Expression and translocation of olfactory receptors"/>
</dbReference>
<dbReference type="SignaLink" id="Q8NGJ4"/>
<dbReference type="BioGRID-ORCS" id="119678">
    <property type="hits" value="11 hits in 744 CRISPR screens"/>
</dbReference>
<dbReference type="GeneWiki" id="OR52E2"/>
<dbReference type="GenomeRNAi" id="119678"/>
<dbReference type="Pharos" id="Q8NGJ4">
    <property type="development level" value="Tdark"/>
</dbReference>
<dbReference type="PRO" id="PR:Q8NGJ4"/>
<dbReference type="Proteomes" id="UP000005640">
    <property type="component" value="Chromosome 11"/>
</dbReference>
<dbReference type="RNAct" id="Q8NGJ4">
    <property type="molecule type" value="protein"/>
</dbReference>
<dbReference type="Bgee" id="ENSG00000176787">
    <property type="expression patterns" value="Expressed in male germ line stem cell (sensu Vertebrata) in testis"/>
</dbReference>
<dbReference type="GO" id="GO:0005886">
    <property type="term" value="C:plasma membrane"/>
    <property type="evidence" value="ECO:0000318"/>
    <property type="project" value="GO_Central"/>
</dbReference>
<dbReference type="GO" id="GO:0004930">
    <property type="term" value="F:G protein-coupled receptor activity"/>
    <property type="evidence" value="ECO:0007669"/>
    <property type="project" value="UniProtKB-KW"/>
</dbReference>
<dbReference type="GO" id="GO:0004984">
    <property type="term" value="F:olfactory receptor activity"/>
    <property type="evidence" value="ECO:0000318"/>
    <property type="project" value="GO_Central"/>
</dbReference>
<dbReference type="CDD" id="cd15952">
    <property type="entry name" value="7tmA_OR52E-like"/>
    <property type="match status" value="1"/>
</dbReference>
<dbReference type="FunFam" id="1.20.1070.10:FF:000006">
    <property type="entry name" value="Olfactory receptor"/>
    <property type="match status" value="1"/>
</dbReference>
<dbReference type="Gene3D" id="1.20.1070.10">
    <property type="entry name" value="Rhodopsin 7-helix transmembrane proteins"/>
    <property type="match status" value="1"/>
</dbReference>
<dbReference type="InterPro" id="IPR000276">
    <property type="entry name" value="GPCR_Rhodpsn"/>
</dbReference>
<dbReference type="InterPro" id="IPR017452">
    <property type="entry name" value="GPCR_Rhodpsn_7TM"/>
</dbReference>
<dbReference type="InterPro" id="IPR000725">
    <property type="entry name" value="Olfact_rcpt"/>
</dbReference>
<dbReference type="InterPro" id="IPR050402">
    <property type="entry name" value="OR51/52/56-like"/>
</dbReference>
<dbReference type="PANTHER" id="PTHR26450:SF392">
    <property type="entry name" value="OLFACTORY RECEPTOR 52E2"/>
    <property type="match status" value="1"/>
</dbReference>
<dbReference type="PANTHER" id="PTHR26450">
    <property type="entry name" value="OLFACTORY RECEPTOR 56B1-RELATED"/>
    <property type="match status" value="1"/>
</dbReference>
<dbReference type="Pfam" id="PF13853">
    <property type="entry name" value="7tm_4"/>
    <property type="match status" value="1"/>
</dbReference>
<dbReference type="PRINTS" id="PR00237">
    <property type="entry name" value="GPCRRHODOPSN"/>
</dbReference>
<dbReference type="PRINTS" id="PR00245">
    <property type="entry name" value="OLFACTORYR"/>
</dbReference>
<dbReference type="SUPFAM" id="SSF81321">
    <property type="entry name" value="Family A G protein-coupled receptor-like"/>
    <property type="match status" value="1"/>
</dbReference>
<dbReference type="PROSITE" id="PS50262">
    <property type="entry name" value="G_PROTEIN_RECEP_F1_2"/>
    <property type="match status" value="1"/>
</dbReference>
<organism>
    <name type="scientific">Homo sapiens</name>
    <name type="common">Human</name>
    <dbReference type="NCBI Taxonomy" id="9606"/>
    <lineage>
        <taxon>Eukaryota</taxon>
        <taxon>Metazoa</taxon>
        <taxon>Chordata</taxon>
        <taxon>Craniata</taxon>
        <taxon>Vertebrata</taxon>
        <taxon>Euteleostomi</taxon>
        <taxon>Mammalia</taxon>
        <taxon>Eutheria</taxon>
        <taxon>Euarchontoglires</taxon>
        <taxon>Primates</taxon>
        <taxon>Haplorrhini</taxon>
        <taxon>Catarrhini</taxon>
        <taxon>Hominidae</taxon>
        <taxon>Homo</taxon>
    </lineage>
</organism>
<feature type="chain" id="PRO_0000150772" description="Olfactory receptor 52E2">
    <location>
        <begin position="1"/>
        <end position="325"/>
    </location>
</feature>
<feature type="topological domain" description="Extracellular" evidence="1">
    <location>
        <begin position="1"/>
        <end position="27"/>
    </location>
</feature>
<feature type="transmembrane region" description="Helical; Name=1" evidence="1">
    <location>
        <begin position="28"/>
        <end position="48"/>
    </location>
</feature>
<feature type="topological domain" description="Cytoplasmic" evidence="1">
    <location>
        <begin position="49"/>
        <end position="56"/>
    </location>
</feature>
<feature type="transmembrane region" description="Helical; Name=2" evidence="1">
    <location>
        <begin position="57"/>
        <end position="77"/>
    </location>
</feature>
<feature type="topological domain" description="Extracellular" evidence="1">
    <location>
        <begin position="78"/>
        <end position="101"/>
    </location>
</feature>
<feature type="transmembrane region" description="Helical; Name=3" evidence="1">
    <location>
        <begin position="102"/>
        <end position="122"/>
    </location>
</feature>
<feature type="topological domain" description="Cytoplasmic" evidence="1">
    <location>
        <begin position="123"/>
        <end position="141"/>
    </location>
</feature>
<feature type="transmembrane region" description="Helical; Name=4" evidence="1">
    <location>
        <begin position="142"/>
        <end position="162"/>
    </location>
</feature>
<feature type="topological domain" description="Extracellular" evidence="1">
    <location>
        <begin position="163"/>
        <end position="198"/>
    </location>
</feature>
<feature type="transmembrane region" description="Helical; Name=5" evidence="1">
    <location>
        <begin position="199"/>
        <end position="218"/>
    </location>
</feature>
<feature type="topological domain" description="Cytoplasmic" evidence="1">
    <location>
        <begin position="219"/>
        <end position="238"/>
    </location>
</feature>
<feature type="transmembrane region" description="Helical; Name=6" evidence="1">
    <location>
        <begin position="239"/>
        <end position="259"/>
    </location>
</feature>
<feature type="topological domain" description="Extracellular" evidence="1">
    <location>
        <begin position="260"/>
        <end position="274"/>
    </location>
</feature>
<feature type="transmembrane region" description="Helical; Name=7" evidence="1">
    <location>
        <begin position="275"/>
        <end position="295"/>
    </location>
</feature>
<feature type="topological domain" description="Cytoplasmic" evidence="1">
    <location>
        <begin position="296"/>
        <end position="325"/>
    </location>
</feature>
<feature type="glycosylation site" description="N-linked (GlcNAc...) asparagine" evidence="1">
    <location>
        <position position="5"/>
    </location>
</feature>
<feature type="disulfide bond" evidence="2">
    <location>
        <begin position="99"/>
        <end position="191"/>
    </location>
</feature>
<feature type="sequence variant" id="VAR_053332" description="In dbSNP:rs16909440.">
    <original>N</original>
    <variation>S</variation>
    <location>
        <position position="5"/>
    </location>
</feature>
<feature type="sequence variant" id="VAR_053333" description="In dbSNP:rs11035396.">
    <original>R</original>
    <variation>W</variation>
    <location>
        <position position="167"/>
    </location>
</feature>
<feature type="sequence variant" id="VAR_053334" description="In dbSNP:rs2500052." evidence="3">
    <original>R</original>
    <variation>C</variation>
    <location>
        <position position="264"/>
    </location>
</feature>